<protein>
    <recommendedName>
        <fullName evidence="1">Protein RecA</fullName>
    </recommendedName>
    <alternativeName>
        <fullName evidence="1">Recombinase A</fullName>
    </alternativeName>
</protein>
<evidence type="ECO:0000255" key="1">
    <source>
        <dbReference type="HAMAP-Rule" id="MF_00268"/>
    </source>
</evidence>
<organism>
    <name type="scientific">Clostridium perfringens (strain SM101 / Type A)</name>
    <dbReference type="NCBI Taxonomy" id="289380"/>
    <lineage>
        <taxon>Bacteria</taxon>
        <taxon>Bacillati</taxon>
        <taxon>Bacillota</taxon>
        <taxon>Clostridia</taxon>
        <taxon>Eubacteriales</taxon>
        <taxon>Clostridiaceae</taxon>
        <taxon>Clostridium</taxon>
    </lineage>
</organism>
<accession>Q0SSE7</accession>
<reference key="1">
    <citation type="journal article" date="2006" name="Genome Res.">
        <title>Skewed genomic variability in strains of the toxigenic bacterial pathogen, Clostridium perfringens.</title>
        <authorList>
            <person name="Myers G.S.A."/>
            <person name="Rasko D.A."/>
            <person name="Cheung J.K."/>
            <person name="Ravel J."/>
            <person name="Seshadri R."/>
            <person name="DeBoy R.T."/>
            <person name="Ren Q."/>
            <person name="Varga J."/>
            <person name="Awad M.M."/>
            <person name="Brinkac L.M."/>
            <person name="Daugherty S.C."/>
            <person name="Haft D.H."/>
            <person name="Dodson R.J."/>
            <person name="Madupu R."/>
            <person name="Nelson W.C."/>
            <person name="Rosovitz M.J."/>
            <person name="Sullivan S.A."/>
            <person name="Khouri H."/>
            <person name="Dimitrov G.I."/>
            <person name="Watkins K.L."/>
            <person name="Mulligan S."/>
            <person name="Benton J."/>
            <person name="Radune D."/>
            <person name="Fisher D.J."/>
            <person name="Atkins H.S."/>
            <person name="Hiscox T."/>
            <person name="Jost B.H."/>
            <person name="Billington S.J."/>
            <person name="Songer J.G."/>
            <person name="McClane B.A."/>
            <person name="Titball R.W."/>
            <person name="Rood J.I."/>
            <person name="Melville S.B."/>
            <person name="Paulsen I.T."/>
        </authorList>
    </citation>
    <scope>NUCLEOTIDE SEQUENCE [LARGE SCALE GENOMIC DNA]</scope>
    <source>
        <strain>SM101 / Type A</strain>
    </source>
</reference>
<feature type="chain" id="PRO_1000047904" description="Protein RecA">
    <location>
        <begin position="1"/>
        <end position="352"/>
    </location>
</feature>
<feature type="binding site" evidence="1">
    <location>
        <begin position="68"/>
        <end position="75"/>
    </location>
    <ligand>
        <name>ATP</name>
        <dbReference type="ChEBI" id="CHEBI:30616"/>
    </ligand>
</feature>
<comment type="function">
    <text evidence="1">Can catalyze the hydrolysis of ATP in the presence of single-stranded DNA, the ATP-dependent uptake of single-stranded DNA by duplex DNA, and the ATP-dependent hybridization of homologous single-stranded DNAs. It interacts with LexA causing its activation and leading to its autocatalytic cleavage.</text>
</comment>
<comment type="subcellular location">
    <subcellularLocation>
        <location evidence="1">Cytoplasm</location>
    </subcellularLocation>
</comment>
<comment type="similarity">
    <text evidence="1">Belongs to the RecA family.</text>
</comment>
<gene>
    <name evidence="1" type="primary">recA</name>
    <name type="ordered locus">CPR_1645</name>
</gene>
<sequence>MANIDKDKLKAIEMAMGQIEKQFGKGSVMKLGEQGAPQMDAVSTGCLDLDIALGIGGVPKGRIIEIYGPESSGKTTVALHVVAEAQKLGGAAAYIDAEHALDPVYAKRLGVNIDDLVVSQPDTGEQALEITEALVRSGAIDVLVVDSVAALVPRAEIEGEMGDSHVGLQARLMSQALRKLTGTINKSNCVVIFINQLREKVGIMFGNPETTPGGRALKFYASVRMDIRRIDSIKQGDGITGNRTRVKIVKNKVAPPFKQAEFDIMYNEGISKEGNIVDVGVKENIVQKSGAWFSYGDIRLGQGRENAKQYLKENPSVALDIENQIREKYSLPLAKAVESTSVEKNTEESVES</sequence>
<keyword id="KW-0067">ATP-binding</keyword>
<keyword id="KW-0963">Cytoplasm</keyword>
<keyword id="KW-0227">DNA damage</keyword>
<keyword id="KW-0233">DNA recombination</keyword>
<keyword id="KW-0234">DNA repair</keyword>
<keyword id="KW-0238">DNA-binding</keyword>
<keyword id="KW-0547">Nucleotide-binding</keyword>
<keyword id="KW-0742">SOS response</keyword>
<dbReference type="EMBL" id="CP000312">
    <property type="protein sequence ID" value="ABG85729.1"/>
    <property type="molecule type" value="Genomic_DNA"/>
</dbReference>
<dbReference type="RefSeq" id="WP_011592581.1">
    <property type="nucleotide sequence ID" value="NC_008262.1"/>
</dbReference>
<dbReference type="SMR" id="Q0SSE7"/>
<dbReference type="KEGG" id="cpr:CPR_1645"/>
<dbReference type="Proteomes" id="UP000001824">
    <property type="component" value="Chromosome"/>
</dbReference>
<dbReference type="GO" id="GO:0005829">
    <property type="term" value="C:cytosol"/>
    <property type="evidence" value="ECO:0007669"/>
    <property type="project" value="TreeGrafter"/>
</dbReference>
<dbReference type="GO" id="GO:0005524">
    <property type="term" value="F:ATP binding"/>
    <property type="evidence" value="ECO:0007669"/>
    <property type="project" value="UniProtKB-UniRule"/>
</dbReference>
<dbReference type="GO" id="GO:0016887">
    <property type="term" value="F:ATP hydrolysis activity"/>
    <property type="evidence" value="ECO:0007669"/>
    <property type="project" value="InterPro"/>
</dbReference>
<dbReference type="GO" id="GO:0140664">
    <property type="term" value="F:ATP-dependent DNA damage sensor activity"/>
    <property type="evidence" value="ECO:0007669"/>
    <property type="project" value="InterPro"/>
</dbReference>
<dbReference type="GO" id="GO:0003684">
    <property type="term" value="F:damaged DNA binding"/>
    <property type="evidence" value="ECO:0007669"/>
    <property type="project" value="UniProtKB-UniRule"/>
</dbReference>
<dbReference type="GO" id="GO:0003697">
    <property type="term" value="F:single-stranded DNA binding"/>
    <property type="evidence" value="ECO:0007669"/>
    <property type="project" value="UniProtKB-UniRule"/>
</dbReference>
<dbReference type="GO" id="GO:0006310">
    <property type="term" value="P:DNA recombination"/>
    <property type="evidence" value="ECO:0007669"/>
    <property type="project" value="UniProtKB-UniRule"/>
</dbReference>
<dbReference type="GO" id="GO:0006281">
    <property type="term" value="P:DNA repair"/>
    <property type="evidence" value="ECO:0007669"/>
    <property type="project" value="UniProtKB-UniRule"/>
</dbReference>
<dbReference type="GO" id="GO:0009432">
    <property type="term" value="P:SOS response"/>
    <property type="evidence" value="ECO:0007669"/>
    <property type="project" value="UniProtKB-UniRule"/>
</dbReference>
<dbReference type="CDD" id="cd00983">
    <property type="entry name" value="RecA"/>
    <property type="match status" value="1"/>
</dbReference>
<dbReference type="FunFam" id="3.40.50.300:FF:000087">
    <property type="entry name" value="Recombinase RecA"/>
    <property type="match status" value="1"/>
</dbReference>
<dbReference type="Gene3D" id="3.40.50.300">
    <property type="entry name" value="P-loop containing nucleotide triphosphate hydrolases"/>
    <property type="match status" value="1"/>
</dbReference>
<dbReference type="HAMAP" id="MF_00268">
    <property type="entry name" value="RecA"/>
    <property type="match status" value="1"/>
</dbReference>
<dbReference type="InterPro" id="IPR003593">
    <property type="entry name" value="AAA+_ATPase"/>
</dbReference>
<dbReference type="InterPro" id="IPR013765">
    <property type="entry name" value="DNA_recomb/repair_RecA"/>
</dbReference>
<dbReference type="InterPro" id="IPR020584">
    <property type="entry name" value="DNA_recomb/repair_RecA_CS"/>
</dbReference>
<dbReference type="InterPro" id="IPR027417">
    <property type="entry name" value="P-loop_NTPase"/>
</dbReference>
<dbReference type="InterPro" id="IPR049261">
    <property type="entry name" value="RecA-like_C"/>
</dbReference>
<dbReference type="InterPro" id="IPR049428">
    <property type="entry name" value="RecA-like_N"/>
</dbReference>
<dbReference type="InterPro" id="IPR020588">
    <property type="entry name" value="RecA_ATP-bd"/>
</dbReference>
<dbReference type="InterPro" id="IPR023400">
    <property type="entry name" value="RecA_C_sf"/>
</dbReference>
<dbReference type="InterPro" id="IPR020587">
    <property type="entry name" value="RecA_monomer-monomer_interface"/>
</dbReference>
<dbReference type="NCBIfam" id="TIGR02012">
    <property type="entry name" value="tigrfam_recA"/>
    <property type="match status" value="1"/>
</dbReference>
<dbReference type="PANTHER" id="PTHR45900:SF1">
    <property type="entry name" value="MITOCHONDRIAL DNA REPAIR PROTEIN RECA HOMOLOG-RELATED"/>
    <property type="match status" value="1"/>
</dbReference>
<dbReference type="PANTHER" id="PTHR45900">
    <property type="entry name" value="RECA"/>
    <property type="match status" value="1"/>
</dbReference>
<dbReference type="Pfam" id="PF00154">
    <property type="entry name" value="RecA"/>
    <property type="match status" value="1"/>
</dbReference>
<dbReference type="Pfam" id="PF21096">
    <property type="entry name" value="RecA_C"/>
    <property type="match status" value="1"/>
</dbReference>
<dbReference type="PRINTS" id="PR00142">
    <property type="entry name" value="RECA"/>
</dbReference>
<dbReference type="SMART" id="SM00382">
    <property type="entry name" value="AAA"/>
    <property type="match status" value="1"/>
</dbReference>
<dbReference type="SUPFAM" id="SSF52540">
    <property type="entry name" value="P-loop containing nucleoside triphosphate hydrolases"/>
    <property type="match status" value="1"/>
</dbReference>
<dbReference type="SUPFAM" id="SSF54752">
    <property type="entry name" value="RecA protein, C-terminal domain"/>
    <property type="match status" value="1"/>
</dbReference>
<dbReference type="PROSITE" id="PS00321">
    <property type="entry name" value="RECA_1"/>
    <property type="match status" value="1"/>
</dbReference>
<dbReference type="PROSITE" id="PS50162">
    <property type="entry name" value="RECA_2"/>
    <property type="match status" value="1"/>
</dbReference>
<dbReference type="PROSITE" id="PS50163">
    <property type="entry name" value="RECA_3"/>
    <property type="match status" value="1"/>
</dbReference>
<name>RECA_CLOPS</name>
<proteinExistence type="inferred from homology"/>